<proteinExistence type="inferred from homology"/>
<keyword id="KW-1185">Reference proteome</keyword>
<keyword id="KW-0687">Ribonucleoprotein</keyword>
<keyword id="KW-0689">Ribosomal protein</keyword>
<keyword id="KW-0694">RNA-binding</keyword>
<keyword id="KW-0699">rRNA-binding</keyword>
<organism>
    <name type="scientific">Desulfatibacillum aliphaticivorans</name>
    <dbReference type="NCBI Taxonomy" id="218208"/>
    <lineage>
        <taxon>Bacteria</taxon>
        <taxon>Pseudomonadati</taxon>
        <taxon>Thermodesulfobacteriota</taxon>
        <taxon>Desulfobacteria</taxon>
        <taxon>Desulfobacterales</taxon>
        <taxon>Desulfatibacillaceae</taxon>
        <taxon>Desulfatibacillum</taxon>
    </lineage>
</organism>
<protein>
    <recommendedName>
        <fullName evidence="1">Large ribosomal subunit protein uL18</fullName>
    </recommendedName>
    <alternativeName>
        <fullName evidence="2">50S ribosomal protein L18</fullName>
    </alternativeName>
</protein>
<gene>
    <name evidence="1" type="primary">rplR</name>
    <name type="ordered locus">Dalk_1899</name>
</gene>
<comment type="function">
    <text evidence="1">This is one of the proteins that bind and probably mediate the attachment of the 5S RNA into the large ribosomal subunit, where it forms part of the central protuberance.</text>
</comment>
<comment type="subunit">
    <text evidence="1">Part of the 50S ribosomal subunit; part of the 5S rRNA/L5/L18/L25 subcomplex. Contacts the 5S and 23S rRNAs.</text>
</comment>
<comment type="similarity">
    <text evidence="1">Belongs to the universal ribosomal protein uL18 family.</text>
</comment>
<evidence type="ECO:0000255" key="1">
    <source>
        <dbReference type="HAMAP-Rule" id="MF_01337"/>
    </source>
</evidence>
<evidence type="ECO:0000305" key="2"/>
<sequence length="122" mass="13561">MAKPSKKNRTHEKRKVRVRKKLFGTQDRPRLSVFRSAKHIYAQVIIDETGQTIAGASTLDKEAKDKGGFESKVEAAKFVGKLVAQRAKEKGVTKVVFDRNGFLYHGRVKAVSTGARDGGLEF</sequence>
<name>RL18_DESAL</name>
<reference key="1">
    <citation type="journal article" date="2012" name="Environ. Microbiol.">
        <title>The genome sequence of Desulfatibacillum alkenivorans AK-01: a blueprint for anaerobic alkane oxidation.</title>
        <authorList>
            <person name="Callaghan A.V."/>
            <person name="Morris B.E."/>
            <person name="Pereira I.A."/>
            <person name="McInerney M.J."/>
            <person name="Austin R.N."/>
            <person name="Groves J.T."/>
            <person name="Kukor J.J."/>
            <person name="Suflita J.M."/>
            <person name="Young L.Y."/>
            <person name="Zylstra G.J."/>
            <person name="Wawrik B."/>
        </authorList>
    </citation>
    <scope>NUCLEOTIDE SEQUENCE [LARGE SCALE GENOMIC DNA]</scope>
    <source>
        <strain>AK-01</strain>
    </source>
</reference>
<accession>B8FER9</accession>
<dbReference type="EMBL" id="CP001322">
    <property type="protein sequence ID" value="ACL03596.1"/>
    <property type="molecule type" value="Genomic_DNA"/>
</dbReference>
<dbReference type="RefSeq" id="WP_012611027.1">
    <property type="nucleotide sequence ID" value="NC_011768.1"/>
</dbReference>
<dbReference type="SMR" id="B8FER9"/>
<dbReference type="KEGG" id="dal:Dalk_1899"/>
<dbReference type="eggNOG" id="COG0256">
    <property type="taxonomic scope" value="Bacteria"/>
</dbReference>
<dbReference type="HOGENOM" id="CLU_098841_0_1_7"/>
<dbReference type="Proteomes" id="UP000000739">
    <property type="component" value="Chromosome"/>
</dbReference>
<dbReference type="GO" id="GO:0022625">
    <property type="term" value="C:cytosolic large ribosomal subunit"/>
    <property type="evidence" value="ECO:0007669"/>
    <property type="project" value="TreeGrafter"/>
</dbReference>
<dbReference type="GO" id="GO:0008097">
    <property type="term" value="F:5S rRNA binding"/>
    <property type="evidence" value="ECO:0007669"/>
    <property type="project" value="TreeGrafter"/>
</dbReference>
<dbReference type="GO" id="GO:0003735">
    <property type="term" value="F:structural constituent of ribosome"/>
    <property type="evidence" value="ECO:0007669"/>
    <property type="project" value="InterPro"/>
</dbReference>
<dbReference type="GO" id="GO:0006412">
    <property type="term" value="P:translation"/>
    <property type="evidence" value="ECO:0007669"/>
    <property type="project" value="UniProtKB-UniRule"/>
</dbReference>
<dbReference type="CDD" id="cd00432">
    <property type="entry name" value="Ribosomal_L18_L5e"/>
    <property type="match status" value="1"/>
</dbReference>
<dbReference type="FunFam" id="3.30.420.100:FF:000001">
    <property type="entry name" value="50S ribosomal protein L18"/>
    <property type="match status" value="1"/>
</dbReference>
<dbReference type="Gene3D" id="3.30.420.100">
    <property type="match status" value="1"/>
</dbReference>
<dbReference type="HAMAP" id="MF_01337_B">
    <property type="entry name" value="Ribosomal_uL18_B"/>
    <property type="match status" value="1"/>
</dbReference>
<dbReference type="InterPro" id="IPR004389">
    <property type="entry name" value="Ribosomal_uL18_bac-type"/>
</dbReference>
<dbReference type="InterPro" id="IPR005484">
    <property type="entry name" value="Ribosomal_uL18_bac/euk"/>
</dbReference>
<dbReference type="NCBIfam" id="TIGR00060">
    <property type="entry name" value="L18_bact"/>
    <property type="match status" value="1"/>
</dbReference>
<dbReference type="PANTHER" id="PTHR12899">
    <property type="entry name" value="39S RIBOSOMAL PROTEIN L18, MITOCHONDRIAL"/>
    <property type="match status" value="1"/>
</dbReference>
<dbReference type="PANTHER" id="PTHR12899:SF3">
    <property type="entry name" value="LARGE RIBOSOMAL SUBUNIT PROTEIN UL18M"/>
    <property type="match status" value="1"/>
</dbReference>
<dbReference type="Pfam" id="PF00861">
    <property type="entry name" value="Ribosomal_L18p"/>
    <property type="match status" value="1"/>
</dbReference>
<dbReference type="SUPFAM" id="SSF53137">
    <property type="entry name" value="Translational machinery components"/>
    <property type="match status" value="1"/>
</dbReference>
<feature type="chain" id="PRO_1000166223" description="Large ribosomal subunit protein uL18">
    <location>
        <begin position="1"/>
        <end position="122"/>
    </location>
</feature>